<feature type="chain" id="PRO_1000051419" description="Asparagine--tRNA ligase">
    <location>
        <begin position="1"/>
        <end position="466"/>
    </location>
</feature>
<protein>
    <recommendedName>
        <fullName evidence="1">Asparagine--tRNA ligase</fullName>
        <ecNumber evidence="1">6.1.1.22</ecNumber>
    </recommendedName>
    <alternativeName>
        <fullName evidence="1">Asparaginyl-tRNA synthetase</fullName>
        <shortName evidence="1">AsnRS</shortName>
    </alternativeName>
</protein>
<reference key="1">
    <citation type="submission" date="2006-12" db="EMBL/GenBank/DDBJ databases">
        <title>Complete sequence of Shewanella amazonensis SB2B.</title>
        <authorList>
            <consortium name="US DOE Joint Genome Institute"/>
            <person name="Copeland A."/>
            <person name="Lucas S."/>
            <person name="Lapidus A."/>
            <person name="Barry K."/>
            <person name="Detter J.C."/>
            <person name="Glavina del Rio T."/>
            <person name="Hammon N."/>
            <person name="Israni S."/>
            <person name="Dalin E."/>
            <person name="Tice H."/>
            <person name="Pitluck S."/>
            <person name="Munk A.C."/>
            <person name="Brettin T."/>
            <person name="Bruce D."/>
            <person name="Han C."/>
            <person name="Tapia R."/>
            <person name="Gilna P."/>
            <person name="Schmutz J."/>
            <person name="Larimer F."/>
            <person name="Land M."/>
            <person name="Hauser L."/>
            <person name="Kyrpides N."/>
            <person name="Mikhailova N."/>
            <person name="Fredrickson J."/>
            <person name="Richardson P."/>
        </authorList>
    </citation>
    <scope>NUCLEOTIDE SEQUENCE [LARGE SCALE GENOMIC DNA]</scope>
    <source>
        <strain>ATCC BAA-1098 / SB2B</strain>
    </source>
</reference>
<organism>
    <name type="scientific">Shewanella amazonensis (strain ATCC BAA-1098 / SB2B)</name>
    <dbReference type="NCBI Taxonomy" id="326297"/>
    <lineage>
        <taxon>Bacteria</taxon>
        <taxon>Pseudomonadati</taxon>
        <taxon>Pseudomonadota</taxon>
        <taxon>Gammaproteobacteria</taxon>
        <taxon>Alteromonadales</taxon>
        <taxon>Shewanellaceae</taxon>
        <taxon>Shewanella</taxon>
    </lineage>
</organism>
<sequence length="466" mass="52100">MSIASIASVFKGDFAPGTEITVRGWVRTRRDSKAGISFLAVYDGSCFDAIQGVVPNALSNYNDEVLKLTAGCSVEMTGNLVESPGSGQAFELQATAVKVTGWVDDPDTYPMAAKRHSIEHLRDVAHLRPRTNIIGAVARVRNCLSQAIHRFYHENGFIWVSTPIITASDCEGAGEMFRVSTLDMENLPRTDAGKVDYDQDFFGKEAFLTVSGQLNGETYACALSKIYTFGPTFRAENSNTSRHLAEFWMVEPEVAFADLNDIAGLAESMLKYCFNAVLQERMDDMKFFAERVDGSVIDRLQSFVSSDFAQVDYTDAVEILQNCGKTFEYPVEWGIDLQSEHERYLAEEHFKAPVVVKNYPKDIKAFYMRLNEDGKTVAAMDVLAPGIGEIIGGSQREERLDVLDARLEEMNLSKEDYWWYRDLRRYGTVPHAGFGLGFERLVSYVTGVGNIRDVIPFPRAPRSANF</sequence>
<keyword id="KW-0030">Aminoacyl-tRNA synthetase</keyword>
<keyword id="KW-0067">ATP-binding</keyword>
<keyword id="KW-0963">Cytoplasm</keyword>
<keyword id="KW-0436">Ligase</keyword>
<keyword id="KW-0547">Nucleotide-binding</keyword>
<keyword id="KW-0648">Protein biosynthesis</keyword>
<keyword id="KW-1185">Reference proteome</keyword>
<accession>A1S684</accession>
<dbReference type="EC" id="6.1.1.22" evidence="1"/>
<dbReference type="EMBL" id="CP000507">
    <property type="protein sequence ID" value="ABL99890.1"/>
    <property type="molecule type" value="Genomic_DNA"/>
</dbReference>
<dbReference type="RefSeq" id="WP_011759798.1">
    <property type="nucleotide sequence ID" value="NC_008700.1"/>
</dbReference>
<dbReference type="SMR" id="A1S684"/>
<dbReference type="STRING" id="326297.Sama_1684"/>
<dbReference type="KEGG" id="saz:Sama_1684"/>
<dbReference type="eggNOG" id="COG0017">
    <property type="taxonomic scope" value="Bacteria"/>
</dbReference>
<dbReference type="HOGENOM" id="CLU_004553_2_0_6"/>
<dbReference type="OrthoDB" id="9762036at2"/>
<dbReference type="Proteomes" id="UP000009175">
    <property type="component" value="Chromosome"/>
</dbReference>
<dbReference type="GO" id="GO:0005737">
    <property type="term" value="C:cytoplasm"/>
    <property type="evidence" value="ECO:0007669"/>
    <property type="project" value="UniProtKB-SubCell"/>
</dbReference>
<dbReference type="GO" id="GO:0004816">
    <property type="term" value="F:asparagine-tRNA ligase activity"/>
    <property type="evidence" value="ECO:0007669"/>
    <property type="project" value="UniProtKB-UniRule"/>
</dbReference>
<dbReference type="GO" id="GO:0005524">
    <property type="term" value="F:ATP binding"/>
    <property type="evidence" value="ECO:0007669"/>
    <property type="project" value="UniProtKB-UniRule"/>
</dbReference>
<dbReference type="GO" id="GO:0003676">
    <property type="term" value="F:nucleic acid binding"/>
    <property type="evidence" value="ECO:0007669"/>
    <property type="project" value="InterPro"/>
</dbReference>
<dbReference type="GO" id="GO:0006421">
    <property type="term" value="P:asparaginyl-tRNA aminoacylation"/>
    <property type="evidence" value="ECO:0007669"/>
    <property type="project" value="UniProtKB-UniRule"/>
</dbReference>
<dbReference type="CDD" id="cd00776">
    <property type="entry name" value="AsxRS_core"/>
    <property type="match status" value="1"/>
</dbReference>
<dbReference type="CDD" id="cd04318">
    <property type="entry name" value="EcAsnRS_like_N"/>
    <property type="match status" value="1"/>
</dbReference>
<dbReference type="FunFam" id="3.30.930.10:FF:000016">
    <property type="entry name" value="Asparagine--tRNA ligase"/>
    <property type="match status" value="1"/>
</dbReference>
<dbReference type="Gene3D" id="3.30.930.10">
    <property type="entry name" value="Bira Bifunctional Protein, Domain 2"/>
    <property type="match status" value="1"/>
</dbReference>
<dbReference type="Gene3D" id="2.40.50.140">
    <property type="entry name" value="Nucleic acid-binding proteins"/>
    <property type="match status" value="1"/>
</dbReference>
<dbReference type="HAMAP" id="MF_00534">
    <property type="entry name" value="Asn_tRNA_synth"/>
    <property type="match status" value="1"/>
</dbReference>
<dbReference type="InterPro" id="IPR004364">
    <property type="entry name" value="Aa-tRNA-synt_II"/>
</dbReference>
<dbReference type="InterPro" id="IPR006195">
    <property type="entry name" value="aa-tRNA-synth_II"/>
</dbReference>
<dbReference type="InterPro" id="IPR045864">
    <property type="entry name" value="aa-tRNA-synth_II/BPL/LPL"/>
</dbReference>
<dbReference type="InterPro" id="IPR004522">
    <property type="entry name" value="Asn-tRNA-ligase"/>
</dbReference>
<dbReference type="InterPro" id="IPR002312">
    <property type="entry name" value="Asp/Asn-tRNA-synth_IIb"/>
</dbReference>
<dbReference type="InterPro" id="IPR012340">
    <property type="entry name" value="NA-bd_OB-fold"/>
</dbReference>
<dbReference type="InterPro" id="IPR004365">
    <property type="entry name" value="NA-bd_OB_tRNA"/>
</dbReference>
<dbReference type="NCBIfam" id="TIGR00457">
    <property type="entry name" value="asnS"/>
    <property type="match status" value="1"/>
</dbReference>
<dbReference type="NCBIfam" id="NF003037">
    <property type="entry name" value="PRK03932.1"/>
    <property type="match status" value="1"/>
</dbReference>
<dbReference type="PANTHER" id="PTHR22594:SF34">
    <property type="entry name" value="ASPARAGINE--TRNA LIGASE, MITOCHONDRIAL-RELATED"/>
    <property type="match status" value="1"/>
</dbReference>
<dbReference type="PANTHER" id="PTHR22594">
    <property type="entry name" value="ASPARTYL/LYSYL-TRNA SYNTHETASE"/>
    <property type="match status" value="1"/>
</dbReference>
<dbReference type="Pfam" id="PF00152">
    <property type="entry name" value="tRNA-synt_2"/>
    <property type="match status" value="1"/>
</dbReference>
<dbReference type="Pfam" id="PF01336">
    <property type="entry name" value="tRNA_anti-codon"/>
    <property type="match status" value="1"/>
</dbReference>
<dbReference type="PRINTS" id="PR01042">
    <property type="entry name" value="TRNASYNTHASP"/>
</dbReference>
<dbReference type="SUPFAM" id="SSF55681">
    <property type="entry name" value="Class II aaRS and biotin synthetases"/>
    <property type="match status" value="1"/>
</dbReference>
<dbReference type="SUPFAM" id="SSF50249">
    <property type="entry name" value="Nucleic acid-binding proteins"/>
    <property type="match status" value="1"/>
</dbReference>
<dbReference type="PROSITE" id="PS50862">
    <property type="entry name" value="AA_TRNA_LIGASE_II"/>
    <property type="match status" value="1"/>
</dbReference>
<evidence type="ECO:0000255" key="1">
    <source>
        <dbReference type="HAMAP-Rule" id="MF_00534"/>
    </source>
</evidence>
<gene>
    <name evidence="1" type="primary">asnS</name>
    <name type="ordered locus">Sama_1684</name>
</gene>
<proteinExistence type="inferred from homology"/>
<comment type="catalytic activity">
    <reaction evidence="1">
        <text>tRNA(Asn) + L-asparagine + ATP = L-asparaginyl-tRNA(Asn) + AMP + diphosphate + H(+)</text>
        <dbReference type="Rhea" id="RHEA:11180"/>
        <dbReference type="Rhea" id="RHEA-COMP:9659"/>
        <dbReference type="Rhea" id="RHEA-COMP:9674"/>
        <dbReference type="ChEBI" id="CHEBI:15378"/>
        <dbReference type="ChEBI" id="CHEBI:30616"/>
        <dbReference type="ChEBI" id="CHEBI:33019"/>
        <dbReference type="ChEBI" id="CHEBI:58048"/>
        <dbReference type="ChEBI" id="CHEBI:78442"/>
        <dbReference type="ChEBI" id="CHEBI:78515"/>
        <dbReference type="ChEBI" id="CHEBI:456215"/>
        <dbReference type="EC" id="6.1.1.22"/>
    </reaction>
</comment>
<comment type="subunit">
    <text evidence="1">Homodimer.</text>
</comment>
<comment type="subcellular location">
    <subcellularLocation>
        <location evidence="1">Cytoplasm</location>
    </subcellularLocation>
</comment>
<comment type="similarity">
    <text evidence="1">Belongs to the class-II aminoacyl-tRNA synthetase family.</text>
</comment>
<name>SYN_SHEAM</name>